<proteinExistence type="inferred from homology"/>
<keyword id="KW-0066">ATP synthesis</keyword>
<keyword id="KW-0375">Hydrogen ion transport</keyword>
<keyword id="KW-0406">Ion transport</keyword>
<keyword id="KW-0813">Transport</keyword>
<sequence>MAKLNVNPTRMELSKLKKRLTTSTRSHKLLKDKQDELMRQFINLVKYNNKLRKEVEDNLQGSLKDFVMARAVMSSEFLEEAIVYPKEHISVEVGEKNVMSVSVPVMNFKRQLEGDEGSIYPYGFANTSSELDDTLSKLYEILPQLLELAEVEKSCQLMANEIESTRRRVNALEYMTIPQLQETIKYIRMRLDENERSATTRLMKVKSMIEQRG</sequence>
<gene>
    <name evidence="1" type="primary">atpD</name>
    <name type="ordered locus">CLH_2587</name>
</gene>
<organism>
    <name type="scientific">Clostridium botulinum (strain Alaska E43 / Type E3)</name>
    <dbReference type="NCBI Taxonomy" id="508767"/>
    <lineage>
        <taxon>Bacteria</taxon>
        <taxon>Bacillati</taxon>
        <taxon>Bacillota</taxon>
        <taxon>Clostridia</taxon>
        <taxon>Eubacteriales</taxon>
        <taxon>Clostridiaceae</taxon>
        <taxon>Clostridium</taxon>
    </lineage>
</organism>
<reference key="1">
    <citation type="submission" date="2008-05" db="EMBL/GenBank/DDBJ databases">
        <title>Complete genome sequence of Clostridium botulinum E3 str. Alaska E43.</title>
        <authorList>
            <person name="Brinkac L.M."/>
            <person name="Brown J.L."/>
            <person name="Bruce D."/>
            <person name="Detter C."/>
            <person name="Munk C."/>
            <person name="Smith L.A."/>
            <person name="Smith T.J."/>
            <person name="Sutton G."/>
            <person name="Brettin T.S."/>
        </authorList>
    </citation>
    <scope>NUCLEOTIDE SEQUENCE [LARGE SCALE GENOMIC DNA]</scope>
    <source>
        <strain>Alaska E43 / Type E3</strain>
    </source>
</reference>
<protein>
    <recommendedName>
        <fullName evidence="1">V-type ATP synthase subunit D</fullName>
    </recommendedName>
    <alternativeName>
        <fullName evidence="1">V-ATPase subunit D</fullName>
    </alternativeName>
</protein>
<accession>B2UWY2</accession>
<name>VATD_CLOBA</name>
<dbReference type="EMBL" id="CP001078">
    <property type="protein sequence ID" value="ACD51328.1"/>
    <property type="molecule type" value="Genomic_DNA"/>
</dbReference>
<dbReference type="RefSeq" id="WP_003374514.1">
    <property type="nucleotide sequence ID" value="NC_010723.1"/>
</dbReference>
<dbReference type="SMR" id="B2UWY2"/>
<dbReference type="KEGG" id="cbt:CLH_2587"/>
<dbReference type="HOGENOM" id="CLU_069688_2_1_9"/>
<dbReference type="GO" id="GO:0005524">
    <property type="term" value="F:ATP binding"/>
    <property type="evidence" value="ECO:0007669"/>
    <property type="project" value="UniProtKB-UniRule"/>
</dbReference>
<dbReference type="GO" id="GO:0046933">
    <property type="term" value="F:proton-transporting ATP synthase activity, rotational mechanism"/>
    <property type="evidence" value="ECO:0007669"/>
    <property type="project" value="UniProtKB-UniRule"/>
</dbReference>
<dbReference type="GO" id="GO:0046961">
    <property type="term" value="F:proton-transporting ATPase activity, rotational mechanism"/>
    <property type="evidence" value="ECO:0007669"/>
    <property type="project" value="InterPro"/>
</dbReference>
<dbReference type="GO" id="GO:0042777">
    <property type="term" value="P:proton motive force-driven plasma membrane ATP synthesis"/>
    <property type="evidence" value="ECO:0007669"/>
    <property type="project" value="UniProtKB-UniRule"/>
</dbReference>
<dbReference type="FunFam" id="1.10.287.3240:FF:000007">
    <property type="entry name" value="V-type ATP synthase subunit D"/>
    <property type="match status" value="1"/>
</dbReference>
<dbReference type="Gene3D" id="1.10.287.3240">
    <property type="match status" value="1"/>
</dbReference>
<dbReference type="HAMAP" id="MF_00271">
    <property type="entry name" value="ATP_synth_D_arch"/>
    <property type="match status" value="1"/>
</dbReference>
<dbReference type="InterPro" id="IPR002699">
    <property type="entry name" value="V_ATPase_D"/>
</dbReference>
<dbReference type="NCBIfam" id="NF001543">
    <property type="entry name" value="PRK00373.1-2"/>
    <property type="match status" value="1"/>
</dbReference>
<dbReference type="NCBIfam" id="TIGR00309">
    <property type="entry name" value="V_ATPase_subD"/>
    <property type="match status" value="1"/>
</dbReference>
<dbReference type="PANTHER" id="PTHR11671">
    <property type="entry name" value="V-TYPE ATP SYNTHASE SUBUNIT D"/>
    <property type="match status" value="1"/>
</dbReference>
<dbReference type="Pfam" id="PF01813">
    <property type="entry name" value="ATP-synt_D"/>
    <property type="match status" value="1"/>
</dbReference>
<feature type="chain" id="PRO_1000114476" description="V-type ATP synthase subunit D">
    <location>
        <begin position="1"/>
        <end position="213"/>
    </location>
</feature>
<evidence type="ECO:0000255" key="1">
    <source>
        <dbReference type="HAMAP-Rule" id="MF_00271"/>
    </source>
</evidence>
<comment type="function">
    <text evidence="1">Produces ATP from ADP in the presence of a proton gradient across the membrane.</text>
</comment>
<comment type="similarity">
    <text evidence="1">Belongs to the V-ATPase D subunit family.</text>
</comment>